<reference key="1">
    <citation type="journal article" date="2005" name="Science">
        <title>The transcriptional landscape of the mammalian genome.</title>
        <authorList>
            <person name="Carninci P."/>
            <person name="Kasukawa T."/>
            <person name="Katayama S."/>
            <person name="Gough J."/>
            <person name="Frith M.C."/>
            <person name="Maeda N."/>
            <person name="Oyama R."/>
            <person name="Ravasi T."/>
            <person name="Lenhard B."/>
            <person name="Wells C."/>
            <person name="Kodzius R."/>
            <person name="Shimokawa K."/>
            <person name="Bajic V.B."/>
            <person name="Brenner S.E."/>
            <person name="Batalov S."/>
            <person name="Forrest A.R."/>
            <person name="Zavolan M."/>
            <person name="Davis M.J."/>
            <person name="Wilming L.G."/>
            <person name="Aidinis V."/>
            <person name="Allen J.E."/>
            <person name="Ambesi-Impiombato A."/>
            <person name="Apweiler R."/>
            <person name="Aturaliya R.N."/>
            <person name="Bailey T.L."/>
            <person name="Bansal M."/>
            <person name="Baxter L."/>
            <person name="Beisel K.W."/>
            <person name="Bersano T."/>
            <person name="Bono H."/>
            <person name="Chalk A.M."/>
            <person name="Chiu K.P."/>
            <person name="Choudhary V."/>
            <person name="Christoffels A."/>
            <person name="Clutterbuck D.R."/>
            <person name="Crowe M.L."/>
            <person name="Dalla E."/>
            <person name="Dalrymple B.P."/>
            <person name="de Bono B."/>
            <person name="Della Gatta G."/>
            <person name="di Bernardo D."/>
            <person name="Down T."/>
            <person name="Engstrom P."/>
            <person name="Fagiolini M."/>
            <person name="Faulkner G."/>
            <person name="Fletcher C.F."/>
            <person name="Fukushima T."/>
            <person name="Furuno M."/>
            <person name="Futaki S."/>
            <person name="Gariboldi M."/>
            <person name="Georgii-Hemming P."/>
            <person name="Gingeras T.R."/>
            <person name="Gojobori T."/>
            <person name="Green R.E."/>
            <person name="Gustincich S."/>
            <person name="Harbers M."/>
            <person name="Hayashi Y."/>
            <person name="Hensch T.K."/>
            <person name="Hirokawa N."/>
            <person name="Hill D."/>
            <person name="Huminiecki L."/>
            <person name="Iacono M."/>
            <person name="Ikeo K."/>
            <person name="Iwama A."/>
            <person name="Ishikawa T."/>
            <person name="Jakt M."/>
            <person name="Kanapin A."/>
            <person name="Katoh M."/>
            <person name="Kawasawa Y."/>
            <person name="Kelso J."/>
            <person name="Kitamura H."/>
            <person name="Kitano H."/>
            <person name="Kollias G."/>
            <person name="Krishnan S.P."/>
            <person name="Kruger A."/>
            <person name="Kummerfeld S.K."/>
            <person name="Kurochkin I.V."/>
            <person name="Lareau L.F."/>
            <person name="Lazarevic D."/>
            <person name="Lipovich L."/>
            <person name="Liu J."/>
            <person name="Liuni S."/>
            <person name="McWilliam S."/>
            <person name="Madan Babu M."/>
            <person name="Madera M."/>
            <person name="Marchionni L."/>
            <person name="Matsuda H."/>
            <person name="Matsuzawa S."/>
            <person name="Miki H."/>
            <person name="Mignone F."/>
            <person name="Miyake S."/>
            <person name="Morris K."/>
            <person name="Mottagui-Tabar S."/>
            <person name="Mulder N."/>
            <person name="Nakano N."/>
            <person name="Nakauchi H."/>
            <person name="Ng P."/>
            <person name="Nilsson R."/>
            <person name="Nishiguchi S."/>
            <person name="Nishikawa S."/>
            <person name="Nori F."/>
            <person name="Ohara O."/>
            <person name="Okazaki Y."/>
            <person name="Orlando V."/>
            <person name="Pang K.C."/>
            <person name="Pavan W.J."/>
            <person name="Pavesi G."/>
            <person name="Pesole G."/>
            <person name="Petrovsky N."/>
            <person name="Piazza S."/>
            <person name="Reed J."/>
            <person name="Reid J.F."/>
            <person name="Ring B.Z."/>
            <person name="Ringwald M."/>
            <person name="Rost B."/>
            <person name="Ruan Y."/>
            <person name="Salzberg S.L."/>
            <person name="Sandelin A."/>
            <person name="Schneider C."/>
            <person name="Schoenbach C."/>
            <person name="Sekiguchi K."/>
            <person name="Semple C.A."/>
            <person name="Seno S."/>
            <person name="Sessa L."/>
            <person name="Sheng Y."/>
            <person name="Shibata Y."/>
            <person name="Shimada H."/>
            <person name="Shimada K."/>
            <person name="Silva D."/>
            <person name="Sinclair B."/>
            <person name="Sperling S."/>
            <person name="Stupka E."/>
            <person name="Sugiura K."/>
            <person name="Sultana R."/>
            <person name="Takenaka Y."/>
            <person name="Taki K."/>
            <person name="Tammoja K."/>
            <person name="Tan S.L."/>
            <person name="Tang S."/>
            <person name="Taylor M.S."/>
            <person name="Tegner J."/>
            <person name="Teichmann S.A."/>
            <person name="Ueda H.R."/>
            <person name="van Nimwegen E."/>
            <person name="Verardo R."/>
            <person name="Wei C.L."/>
            <person name="Yagi K."/>
            <person name="Yamanishi H."/>
            <person name="Zabarovsky E."/>
            <person name="Zhu S."/>
            <person name="Zimmer A."/>
            <person name="Hide W."/>
            <person name="Bult C."/>
            <person name="Grimmond S.M."/>
            <person name="Teasdale R.D."/>
            <person name="Liu E.T."/>
            <person name="Brusic V."/>
            <person name="Quackenbush J."/>
            <person name="Wahlestedt C."/>
            <person name="Mattick J.S."/>
            <person name="Hume D.A."/>
            <person name="Kai C."/>
            <person name="Sasaki D."/>
            <person name="Tomaru Y."/>
            <person name="Fukuda S."/>
            <person name="Kanamori-Katayama M."/>
            <person name="Suzuki M."/>
            <person name="Aoki J."/>
            <person name="Arakawa T."/>
            <person name="Iida J."/>
            <person name="Imamura K."/>
            <person name="Itoh M."/>
            <person name="Kato T."/>
            <person name="Kawaji H."/>
            <person name="Kawagashira N."/>
            <person name="Kawashima T."/>
            <person name="Kojima M."/>
            <person name="Kondo S."/>
            <person name="Konno H."/>
            <person name="Nakano K."/>
            <person name="Ninomiya N."/>
            <person name="Nishio T."/>
            <person name="Okada M."/>
            <person name="Plessy C."/>
            <person name="Shibata K."/>
            <person name="Shiraki T."/>
            <person name="Suzuki S."/>
            <person name="Tagami M."/>
            <person name="Waki K."/>
            <person name="Watahiki A."/>
            <person name="Okamura-Oho Y."/>
            <person name="Suzuki H."/>
            <person name="Kawai J."/>
            <person name="Hayashizaki Y."/>
        </authorList>
    </citation>
    <scope>NUCLEOTIDE SEQUENCE [LARGE SCALE MRNA]</scope>
    <source>
        <strain>C57BL/6J</strain>
        <tissue>Hypothalamus</tissue>
        <tissue>Testis</tissue>
    </source>
</reference>
<accession>Q3V080</accession>
<accession>Q3V3L4</accession>
<sequence>MSKNLLTFEDVSVNFTQEEWQWLSDTQRDLYRKVTLENYKSLVSLGIPVYKPAVISLLEQGKDPWMVQKKGARDTCPDWQYVFKGTEFISKQDIYKESAKVLTMGRSHFSSSLDCPDLKEDHENEDWFKNRLGRQEVHSHQLFITHKEVPESEIRGCNPSCQAVHQNAILDVPQCSSTKERIDQSEPQKRSYRKKSVEMKHKKVQVEKRILKCSECEKVFNQTSSLTLHQRIHTGEKPYACVECGKAFSQSANLAQHKRIHTGEKPYECKECRKAFSQNAHLAQHQRVHTGEKPYQCKECKKAFSQIAHLTQHQRIHTGERPFECIECGKAFSNGSFLAQHQRIHTGEKPYVCHVCGKAFSHRGYLIVHQRIHTGERPYECKECRKSFSQYAHLSQHQRVHTGEKPYECKVCRKAFSQVAYLDQHQRVHTGEKPYECAECRKAFSNSSSLAQHQRSHTGEKPYICKECRKTFSQNAGLAQHQRIHTGEKPYECNICGKAFSYSGSLTLHQRIHTGERPYECKDCRKSFRQRAHLAHHEKVHTMESFLSLSSPSPSMSSQLPRTLGLIS</sequence>
<gene>
    <name type="primary">Znf583</name>
    <name type="synonym">Zfp583</name>
</gene>
<protein>
    <recommendedName>
        <fullName>Zinc finger protein 583</fullName>
    </recommendedName>
</protein>
<organism>
    <name type="scientific">Mus musculus</name>
    <name type="common">Mouse</name>
    <dbReference type="NCBI Taxonomy" id="10090"/>
    <lineage>
        <taxon>Eukaryota</taxon>
        <taxon>Metazoa</taxon>
        <taxon>Chordata</taxon>
        <taxon>Craniata</taxon>
        <taxon>Vertebrata</taxon>
        <taxon>Euteleostomi</taxon>
        <taxon>Mammalia</taxon>
        <taxon>Eutheria</taxon>
        <taxon>Euarchontoglires</taxon>
        <taxon>Glires</taxon>
        <taxon>Rodentia</taxon>
        <taxon>Myomorpha</taxon>
        <taxon>Muroidea</taxon>
        <taxon>Muridae</taxon>
        <taxon>Murinae</taxon>
        <taxon>Mus</taxon>
        <taxon>Mus</taxon>
    </lineage>
</organism>
<keyword id="KW-0238">DNA-binding</keyword>
<keyword id="KW-0479">Metal-binding</keyword>
<keyword id="KW-0539">Nucleus</keyword>
<keyword id="KW-1185">Reference proteome</keyword>
<keyword id="KW-0677">Repeat</keyword>
<keyword id="KW-0804">Transcription</keyword>
<keyword id="KW-0805">Transcription regulation</keyword>
<keyword id="KW-0862">Zinc</keyword>
<keyword id="KW-0863">Zinc-finger</keyword>
<dbReference type="EMBL" id="AK038614">
    <property type="protein sequence ID" value="BAE20539.1"/>
    <property type="molecule type" value="mRNA"/>
</dbReference>
<dbReference type="EMBL" id="AK133380">
    <property type="protein sequence ID" value="BAE21624.1"/>
    <property type="molecule type" value="mRNA"/>
</dbReference>
<dbReference type="CCDS" id="CCDS39751.1"/>
<dbReference type="RefSeq" id="NP_001028421.1">
    <property type="nucleotide sequence ID" value="NM_001033249.3"/>
</dbReference>
<dbReference type="RefSeq" id="XP_011248777.1">
    <property type="nucleotide sequence ID" value="XM_011250475.2"/>
</dbReference>
<dbReference type="SMR" id="Q3V080"/>
<dbReference type="FunCoup" id="Q3V080">
    <property type="interactions" value="29"/>
</dbReference>
<dbReference type="STRING" id="10090.ENSMUSP00000053935"/>
<dbReference type="iPTMnet" id="Q3V080"/>
<dbReference type="PhosphoSitePlus" id="Q3V080"/>
<dbReference type="PaxDb" id="10090-ENSMUSP00000053935"/>
<dbReference type="Antibodypedia" id="33209">
    <property type="antibodies" value="119 antibodies from 18 providers"/>
</dbReference>
<dbReference type="Ensembl" id="ENSMUST00000062765.14">
    <property type="protein sequence ID" value="ENSMUSP00000053935.8"/>
    <property type="gene ID" value="ENSMUSG00000030443.17"/>
</dbReference>
<dbReference type="Ensembl" id="ENSMUST00000108560.8">
    <property type="protein sequence ID" value="ENSMUSP00000104200.2"/>
    <property type="gene ID" value="ENSMUSG00000030443.17"/>
</dbReference>
<dbReference type="Ensembl" id="ENSMUST00000165705.8">
    <property type="protein sequence ID" value="ENSMUSP00000129551.2"/>
    <property type="gene ID" value="ENSMUSG00000030443.17"/>
</dbReference>
<dbReference type="GeneID" id="213011"/>
<dbReference type="KEGG" id="mmu:213011"/>
<dbReference type="UCSC" id="uc009fbc.2">
    <property type="organism name" value="mouse"/>
</dbReference>
<dbReference type="AGR" id="MGI:2682297"/>
<dbReference type="CTD" id="213011"/>
<dbReference type="MGI" id="MGI:2682297">
    <property type="gene designation" value="Zfp583"/>
</dbReference>
<dbReference type="VEuPathDB" id="HostDB:ENSMUSG00000030443"/>
<dbReference type="eggNOG" id="KOG1721">
    <property type="taxonomic scope" value="Eukaryota"/>
</dbReference>
<dbReference type="GeneTree" id="ENSGT00940000161925"/>
<dbReference type="HOGENOM" id="CLU_002678_44_3_1"/>
<dbReference type="InParanoid" id="Q3V080"/>
<dbReference type="OMA" id="EYSKSWQ"/>
<dbReference type="OrthoDB" id="9820409at2759"/>
<dbReference type="PhylomeDB" id="Q3V080"/>
<dbReference type="TreeFam" id="TF341817"/>
<dbReference type="Reactome" id="R-MMU-212436">
    <property type="pathway name" value="Generic Transcription Pathway"/>
</dbReference>
<dbReference type="BioGRID-ORCS" id="213011">
    <property type="hits" value="0 hits in 77 CRISPR screens"/>
</dbReference>
<dbReference type="PRO" id="PR:Q3V080"/>
<dbReference type="Proteomes" id="UP000000589">
    <property type="component" value="Chromosome 7"/>
</dbReference>
<dbReference type="RNAct" id="Q3V080">
    <property type="molecule type" value="protein"/>
</dbReference>
<dbReference type="Bgee" id="ENSMUSG00000030443">
    <property type="expression patterns" value="Expressed in humerus cartilage element and 108 other cell types or tissues"/>
</dbReference>
<dbReference type="ExpressionAtlas" id="Q3V080">
    <property type="expression patterns" value="baseline and differential"/>
</dbReference>
<dbReference type="GO" id="GO:0005634">
    <property type="term" value="C:nucleus"/>
    <property type="evidence" value="ECO:0007669"/>
    <property type="project" value="UniProtKB-SubCell"/>
</dbReference>
<dbReference type="GO" id="GO:0003677">
    <property type="term" value="F:DNA binding"/>
    <property type="evidence" value="ECO:0007669"/>
    <property type="project" value="UniProtKB-KW"/>
</dbReference>
<dbReference type="GO" id="GO:0008270">
    <property type="term" value="F:zinc ion binding"/>
    <property type="evidence" value="ECO:0007669"/>
    <property type="project" value="UniProtKB-KW"/>
</dbReference>
<dbReference type="GO" id="GO:0006355">
    <property type="term" value="P:regulation of DNA-templated transcription"/>
    <property type="evidence" value="ECO:0007669"/>
    <property type="project" value="InterPro"/>
</dbReference>
<dbReference type="CDD" id="cd07765">
    <property type="entry name" value="KRAB_A-box"/>
    <property type="match status" value="1"/>
</dbReference>
<dbReference type="FunFam" id="3.30.160.60:FF:000062">
    <property type="entry name" value="RB-associated KRAB zinc finger protein-like"/>
    <property type="match status" value="1"/>
</dbReference>
<dbReference type="FunFam" id="3.30.160.60:FF:000478">
    <property type="entry name" value="Zinc finger protein 133"/>
    <property type="match status" value="1"/>
</dbReference>
<dbReference type="FunFam" id="3.30.160.60:FF:000295">
    <property type="entry name" value="zinc finger protein 19"/>
    <property type="match status" value="1"/>
</dbReference>
<dbReference type="FunFam" id="3.30.160.60:FF:002343">
    <property type="entry name" value="Zinc finger protein 33A"/>
    <property type="match status" value="2"/>
</dbReference>
<dbReference type="FunFam" id="3.30.160.60:FF:000016">
    <property type="entry name" value="zinc finger protein 37 homolog"/>
    <property type="match status" value="1"/>
</dbReference>
<dbReference type="FunFam" id="3.30.160.60:FF:000101">
    <property type="entry name" value="zinc finger protein 436 isoform X1"/>
    <property type="match status" value="1"/>
</dbReference>
<dbReference type="FunFam" id="3.30.160.60:FF:000238">
    <property type="entry name" value="Zinc finger protein 485"/>
    <property type="match status" value="1"/>
</dbReference>
<dbReference type="FunFam" id="3.30.160.60:FF:000200">
    <property type="entry name" value="zinc finger protein 510 isoform X2"/>
    <property type="match status" value="1"/>
</dbReference>
<dbReference type="FunFam" id="3.30.160.60:FF:000826">
    <property type="entry name" value="Zinc finger protein 570"/>
    <property type="match status" value="1"/>
</dbReference>
<dbReference type="FunFam" id="3.30.160.60:FF:001270">
    <property type="entry name" value="zinc finger protein 583 isoform X1"/>
    <property type="match status" value="2"/>
</dbReference>
<dbReference type="Gene3D" id="6.10.140.140">
    <property type="match status" value="1"/>
</dbReference>
<dbReference type="Gene3D" id="3.30.160.60">
    <property type="entry name" value="Classic Zinc Finger"/>
    <property type="match status" value="12"/>
</dbReference>
<dbReference type="InterPro" id="IPR001909">
    <property type="entry name" value="KRAB"/>
</dbReference>
<dbReference type="InterPro" id="IPR036051">
    <property type="entry name" value="KRAB_dom_sf"/>
</dbReference>
<dbReference type="InterPro" id="IPR050826">
    <property type="entry name" value="Krueppel_C2H2_ZnFinger"/>
</dbReference>
<dbReference type="InterPro" id="IPR036236">
    <property type="entry name" value="Znf_C2H2_sf"/>
</dbReference>
<dbReference type="InterPro" id="IPR013087">
    <property type="entry name" value="Znf_C2H2_type"/>
</dbReference>
<dbReference type="PANTHER" id="PTHR24377">
    <property type="entry name" value="IP01015P-RELATED"/>
    <property type="match status" value="1"/>
</dbReference>
<dbReference type="Pfam" id="PF01352">
    <property type="entry name" value="KRAB"/>
    <property type="match status" value="1"/>
</dbReference>
<dbReference type="Pfam" id="PF00096">
    <property type="entry name" value="zf-C2H2"/>
    <property type="match status" value="12"/>
</dbReference>
<dbReference type="SMART" id="SM00349">
    <property type="entry name" value="KRAB"/>
    <property type="match status" value="1"/>
</dbReference>
<dbReference type="SMART" id="SM00355">
    <property type="entry name" value="ZnF_C2H2"/>
    <property type="match status" value="12"/>
</dbReference>
<dbReference type="SUPFAM" id="SSF57667">
    <property type="entry name" value="beta-beta-alpha zinc fingers"/>
    <property type="match status" value="7"/>
</dbReference>
<dbReference type="SUPFAM" id="SSF109640">
    <property type="entry name" value="KRAB domain (Kruppel-associated box)"/>
    <property type="match status" value="1"/>
</dbReference>
<dbReference type="PROSITE" id="PS50805">
    <property type="entry name" value="KRAB"/>
    <property type="match status" value="1"/>
</dbReference>
<dbReference type="PROSITE" id="PS00028">
    <property type="entry name" value="ZINC_FINGER_C2H2_1"/>
    <property type="match status" value="12"/>
</dbReference>
<dbReference type="PROSITE" id="PS50157">
    <property type="entry name" value="ZINC_FINGER_C2H2_2"/>
    <property type="match status" value="12"/>
</dbReference>
<name>ZN583_MOUSE</name>
<proteinExistence type="evidence at transcript level"/>
<comment type="function">
    <text>May be involved in transcriptional regulation.</text>
</comment>
<comment type="subcellular location">
    <subcellularLocation>
        <location evidence="3">Nucleus</location>
    </subcellularLocation>
</comment>
<comment type="similarity">
    <text evidence="3">Belongs to the krueppel C2H2-type zinc-finger protein family.</text>
</comment>
<feature type="chain" id="PRO_0000047675" description="Zinc finger protein 583">
    <location>
        <begin position="1"/>
        <end position="568"/>
    </location>
</feature>
<feature type="domain" description="KRAB" evidence="2">
    <location>
        <begin position="6"/>
        <end position="77"/>
    </location>
</feature>
<feature type="zinc finger region" description="C2H2-type 1" evidence="1">
    <location>
        <begin position="211"/>
        <end position="233"/>
    </location>
</feature>
<feature type="zinc finger region" description="C2H2-type 2" evidence="1">
    <location>
        <begin position="239"/>
        <end position="261"/>
    </location>
</feature>
<feature type="zinc finger region" description="C2H2-type 3" evidence="1">
    <location>
        <begin position="267"/>
        <end position="289"/>
    </location>
</feature>
<feature type="zinc finger region" description="C2H2-type 4" evidence="1">
    <location>
        <begin position="295"/>
        <end position="317"/>
    </location>
</feature>
<feature type="zinc finger region" description="C2H2-type 5" evidence="1">
    <location>
        <begin position="323"/>
        <end position="345"/>
    </location>
</feature>
<feature type="zinc finger region" description="C2H2-type 6" evidence="1">
    <location>
        <begin position="351"/>
        <end position="373"/>
    </location>
</feature>
<feature type="zinc finger region" description="C2H2-type 7" evidence="1">
    <location>
        <begin position="379"/>
        <end position="401"/>
    </location>
</feature>
<feature type="zinc finger region" description="C2H2-type 8" evidence="1">
    <location>
        <begin position="407"/>
        <end position="429"/>
    </location>
</feature>
<feature type="zinc finger region" description="C2H2-type 9" evidence="1">
    <location>
        <begin position="435"/>
        <end position="457"/>
    </location>
</feature>
<feature type="zinc finger region" description="C2H2-type 10" evidence="1">
    <location>
        <begin position="463"/>
        <end position="485"/>
    </location>
</feature>
<feature type="zinc finger region" description="C2H2-type 11" evidence="1">
    <location>
        <begin position="491"/>
        <end position="513"/>
    </location>
</feature>
<feature type="zinc finger region" description="C2H2-type 12" evidence="1">
    <location>
        <begin position="519"/>
        <end position="541"/>
    </location>
</feature>
<evidence type="ECO:0000255" key="1">
    <source>
        <dbReference type="PROSITE-ProRule" id="PRU00042"/>
    </source>
</evidence>
<evidence type="ECO:0000255" key="2">
    <source>
        <dbReference type="PROSITE-ProRule" id="PRU00119"/>
    </source>
</evidence>
<evidence type="ECO:0000305" key="3"/>